<comment type="function">
    <text evidence="1">Represses the expression of the murPQ operon involved in the uptake and degradation of N-acetylmuramic acid (MurNAc). Binds to two adjacent inverted repeats within the operator region. MurNAc 6-phosphate, the substrate of MurQ, is the specific inducer that weakens binding of MurR to the operator.</text>
</comment>
<comment type="pathway">
    <text>Amino-sugar metabolism; N-acetylmuramate degradation [regulation].</text>
</comment>
<comment type="subunit">
    <text evidence="1">Homotetramer.</text>
</comment>
<accession>B1IX45</accession>
<evidence type="ECO:0000255" key="1">
    <source>
        <dbReference type="HAMAP-Rule" id="MF_02108"/>
    </source>
</evidence>
<sequence length="285" mass="31395">MLYLTKIRNAESEFTENEQKIADFLRANVSELQSVSSRQMAKQLGISQSSIVKFAQKLGAQGFTELRMALIGEYSASREKTNAMALHLHSSITSDDSLEVIARKLNREKELALEQTCALFDYARLQKIIEVISKAPFIQITGLGGSALVGRDLSFKLMKIGYRVACEADTHVQATVSQALKKGDVQIAISYSGSKKEIVLCAEAARKQGATVIAITSLADSPLRRLAHFTLDTVSGETEWRSSSMSTRTAQNSVTDLLFVGLVQLNDVESLKMIQRSSELTQRLK</sequence>
<feature type="chain" id="PRO_0000387754" description="HTH-type transcriptional regulator MurR">
    <location>
        <begin position="1"/>
        <end position="285"/>
    </location>
</feature>
<feature type="domain" description="HTH rpiR-type" evidence="1">
    <location>
        <begin position="1"/>
        <end position="77"/>
    </location>
</feature>
<feature type="domain" description="SIS" evidence="1">
    <location>
        <begin position="128"/>
        <end position="268"/>
    </location>
</feature>
<feature type="DNA-binding region" description="H-T-H motif" evidence="1">
    <location>
        <begin position="37"/>
        <end position="56"/>
    </location>
</feature>
<keyword id="KW-0119">Carbohydrate metabolism</keyword>
<keyword id="KW-0238">DNA-binding</keyword>
<keyword id="KW-0678">Repressor</keyword>
<keyword id="KW-0804">Transcription</keyword>
<keyword id="KW-0805">Transcription regulation</keyword>
<organism>
    <name type="scientific">Escherichia coli (strain ATCC 8739 / DSM 1576 / NBRC 3972 / NCIMB 8545 / WDCM 00012 / Crooks)</name>
    <dbReference type="NCBI Taxonomy" id="481805"/>
    <lineage>
        <taxon>Bacteria</taxon>
        <taxon>Pseudomonadati</taxon>
        <taxon>Pseudomonadota</taxon>
        <taxon>Gammaproteobacteria</taxon>
        <taxon>Enterobacterales</taxon>
        <taxon>Enterobacteriaceae</taxon>
        <taxon>Escherichia</taxon>
    </lineage>
</organism>
<protein>
    <recommendedName>
        <fullName evidence="1">HTH-type transcriptional regulator MurR</fullName>
    </recommendedName>
    <alternativeName>
        <fullName evidence="1">MurPQ operon repressor</fullName>
    </alternativeName>
</protein>
<proteinExistence type="inferred from homology"/>
<reference key="1">
    <citation type="submission" date="2008-02" db="EMBL/GenBank/DDBJ databases">
        <title>Complete sequence of Escherichia coli C str. ATCC 8739.</title>
        <authorList>
            <person name="Copeland A."/>
            <person name="Lucas S."/>
            <person name="Lapidus A."/>
            <person name="Glavina del Rio T."/>
            <person name="Dalin E."/>
            <person name="Tice H."/>
            <person name="Bruce D."/>
            <person name="Goodwin L."/>
            <person name="Pitluck S."/>
            <person name="Kiss H."/>
            <person name="Brettin T."/>
            <person name="Detter J.C."/>
            <person name="Han C."/>
            <person name="Kuske C.R."/>
            <person name="Schmutz J."/>
            <person name="Larimer F."/>
            <person name="Land M."/>
            <person name="Hauser L."/>
            <person name="Kyrpides N."/>
            <person name="Mikhailova N."/>
            <person name="Ingram L."/>
            <person name="Richardson P."/>
        </authorList>
    </citation>
    <scope>NUCLEOTIDE SEQUENCE [LARGE SCALE GENOMIC DNA]</scope>
    <source>
        <strain>ATCC 8739 / DSM 1576 / NBRC 3972 / NCIMB 8545 / WDCM 00012 / Crooks</strain>
    </source>
</reference>
<gene>
    <name evidence="1" type="primary">murR</name>
    <name type="ordered locus">EcolC_1252</name>
</gene>
<name>MURR_ECOLC</name>
<dbReference type="EMBL" id="CP000946">
    <property type="protein sequence ID" value="ACA76918.1"/>
    <property type="molecule type" value="Genomic_DNA"/>
</dbReference>
<dbReference type="RefSeq" id="WP_000966444.1">
    <property type="nucleotide sequence ID" value="NC_010468.1"/>
</dbReference>
<dbReference type="SMR" id="B1IX45"/>
<dbReference type="KEGG" id="ecl:EcolC_1252"/>
<dbReference type="HOGENOM" id="CLU_055769_0_2_6"/>
<dbReference type="UniPathway" id="UPA00342"/>
<dbReference type="GO" id="GO:0097367">
    <property type="term" value="F:carbohydrate derivative binding"/>
    <property type="evidence" value="ECO:0007669"/>
    <property type="project" value="InterPro"/>
</dbReference>
<dbReference type="GO" id="GO:0003677">
    <property type="term" value="F:DNA binding"/>
    <property type="evidence" value="ECO:0007669"/>
    <property type="project" value="UniProtKB-KW"/>
</dbReference>
<dbReference type="GO" id="GO:0003700">
    <property type="term" value="F:DNA-binding transcription factor activity"/>
    <property type="evidence" value="ECO:0007669"/>
    <property type="project" value="UniProtKB-UniRule"/>
</dbReference>
<dbReference type="GO" id="GO:1901135">
    <property type="term" value="P:carbohydrate derivative metabolic process"/>
    <property type="evidence" value="ECO:0007669"/>
    <property type="project" value="InterPro"/>
</dbReference>
<dbReference type="GO" id="GO:0097173">
    <property type="term" value="P:N-acetylmuramic acid catabolic process"/>
    <property type="evidence" value="ECO:0007669"/>
    <property type="project" value="UniProtKB-UniPathway"/>
</dbReference>
<dbReference type="GO" id="GO:0045892">
    <property type="term" value="P:negative regulation of DNA-templated transcription"/>
    <property type="evidence" value="ECO:0007669"/>
    <property type="project" value="UniProtKB-UniRule"/>
</dbReference>
<dbReference type="GO" id="GO:0043470">
    <property type="term" value="P:regulation of carbohydrate catabolic process"/>
    <property type="evidence" value="ECO:0007669"/>
    <property type="project" value="UniProtKB-UniRule"/>
</dbReference>
<dbReference type="CDD" id="cd05013">
    <property type="entry name" value="SIS_RpiR"/>
    <property type="match status" value="1"/>
</dbReference>
<dbReference type="FunFam" id="3.40.50.10490:FF:000028">
    <property type="entry name" value="HTH-type transcriptional regulator MurR"/>
    <property type="match status" value="1"/>
</dbReference>
<dbReference type="Gene3D" id="3.40.50.10490">
    <property type="entry name" value="Glucose-6-phosphate isomerase like protein, domain 1"/>
    <property type="match status" value="1"/>
</dbReference>
<dbReference type="Gene3D" id="1.10.10.10">
    <property type="entry name" value="Winged helix-like DNA-binding domain superfamily/Winged helix DNA-binding domain"/>
    <property type="match status" value="1"/>
</dbReference>
<dbReference type="HAMAP" id="MF_02108">
    <property type="entry name" value="HTH_type_MurR"/>
    <property type="match status" value="1"/>
</dbReference>
<dbReference type="InterPro" id="IPR009057">
    <property type="entry name" value="Homeodomain-like_sf"/>
</dbReference>
<dbReference type="InterPro" id="IPR000281">
    <property type="entry name" value="HTH_RpiR"/>
</dbReference>
<dbReference type="InterPro" id="IPR047640">
    <property type="entry name" value="RpiR-like"/>
</dbReference>
<dbReference type="InterPro" id="IPR035472">
    <property type="entry name" value="RpiR-like_SIS"/>
</dbReference>
<dbReference type="InterPro" id="IPR001347">
    <property type="entry name" value="SIS_dom"/>
</dbReference>
<dbReference type="InterPro" id="IPR046348">
    <property type="entry name" value="SIS_dom_sf"/>
</dbReference>
<dbReference type="InterPro" id="IPR022821">
    <property type="entry name" value="Tscrpt_reg_HTH_MurR"/>
</dbReference>
<dbReference type="InterPro" id="IPR036388">
    <property type="entry name" value="WH-like_DNA-bd_sf"/>
</dbReference>
<dbReference type="NCBIfam" id="NF012026">
    <property type="entry name" value="PRK15482.1"/>
    <property type="match status" value="1"/>
</dbReference>
<dbReference type="PANTHER" id="PTHR30514">
    <property type="entry name" value="GLUCOKINASE"/>
    <property type="match status" value="1"/>
</dbReference>
<dbReference type="PANTHER" id="PTHR30514:SF17">
    <property type="entry name" value="HTH-TYPE TRANSCRIPTIONAL REGULATOR MURR"/>
    <property type="match status" value="1"/>
</dbReference>
<dbReference type="Pfam" id="PF01418">
    <property type="entry name" value="HTH_6"/>
    <property type="match status" value="1"/>
</dbReference>
<dbReference type="Pfam" id="PF01380">
    <property type="entry name" value="SIS"/>
    <property type="match status" value="1"/>
</dbReference>
<dbReference type="SUPFAM" id="SSF46689">
    <property type="entry name" value="Homeodomain-like"/>
    <property type="match status" value="1"/>
</dbReference>
<dbReference type="SUPFAM" id="SSF53697">
    <property type="entry name" value="SIS domain"/>
    <property type="match status" value="1"/>
</dbReference>
<dbReference type="PROSITE" id="PS51071">
    <property type="entry name" value="HTH_RPIR"/>
    <property type="match status" value="1"/>
</dbReference>
<dbReference type="PROSITE" id="PS51464">
    <property type="entry name" value="SIS"/>
    <property type="match status" value="1"/>
</dbReference>